<feature type="chain" id="PRO_0000167251" description="Small ribosomal subunit protein bS16">
    <location>
        <begin position="1"/>
        <end position="90"/>
    </location>
</feature>
<proteinExistence type="inferred from homology"/>
<evidence type="ECO:0000255" key="1">
    <source>
        <dbReference type="HAMAP-Rule" id="MF_00385"/>
    </source>
</evidence>
<evidence type="ECO:0000305" key="2"/>
<organism>
    <name type="scientific">Streptococcus agalactiae serotype III (strain NEM316)</name>
    <dbReference type="NCBI Taxonomy" id="211110"/>
    <lineage>
        <taxon>Bacteria</taxon>
        <taxon>Bacillati</taxon>
        <taxon>Bacillota</taxon>
        <taxon>Bacilli</taxon>
        <taxon>Lactobacillales</taxon>
        <taxon>Streptococcaceae</taxon>
        <taxon>Streptococcus</taxon>
    </lineage>
</organism>
<protein>
    <recommendedName>
        <fullName evidence="1">Small ribosomal subunit protein bS16</fullName>
    </recommendedName>
    <alternativeName>
        <fullName evidence="2">30S ribosomal protein S16</fullName>
    </alternativeName>
</protein>
<gene>
    <name evidence="1" type="primary">rpsP</name>
    <name type="ordered locus">gbs1428</name>
</gene>
<name>RS16_STRA3</name>
<keyword id="KW-0687">Ribonucleoprotein</keyword>
<keyword id="KW-0689">Ribosomal protein</keyword>
<accession>P66442</accession>
<accession>Q8DYW5</accession>
<accession>Q8E4H3</accession>
<reference key="1">
    <citation type="journal article" date="2002" name="Mol. Microbiol.">
        <title>Genome sequence of Streptococcus agalactiae, a pathogen causing invasive neonatal disease.</title>
        <authorList>
            <person name="Glaser P."/>
            <person name="Rusniok C."/>
            <person name="Buchrieser C."/>
            <person name="Chevalier F."/>
            <person name="Frangeul L."/>
            <person name="Msadek T."/>
            <person name="Zouine M."/>
            <person name="Couve E."/>
            <person name="Lalioui L."/>
            <person name="Poyart C."/>
            <person name="Trieu-Cuot P."/>
            <person name="Kunst F."/>
        </authorList>
    </citation>
    <scope>NUCLEOTIDE SEQUENCE [LARGE SCALE GENOMIC DNA]</scope>
    <source>
        <strain>NEM316</strain>
    </source>
</reference>
<sequence>MAVKIRLTRMGSKKKPFYRINVADSRAPRDGRFIETVGTYNPLVAENQVTIKEERVLEWLSKGAQPSDTVRNLLSKAGVMTKFHDQKFSK</sequence>
<dbReference type="EMBL" id="AL766850">
    <property type="protein sequence ID" value="CAD47087.1"/>
    <property type="molecule type" value="Genomic_DNA"/>
</dbReference>
<dbReference type="RefSeq" id="WP_000268757.1">
    <property type="nucleotide sequence ID" value="NC_004368.1"/>
</dbReference>
<dbReference type="SMR" id="P66442"/>
<dbReference type="GeneID" id="66886224"/>
<dbReference type="KEGG" id="san:rpsP"/>
<dbReference type="eggNOG" id="COG0228">
    <property type="taxonomic scope" value="Bacteria"/>
</dbReference>
<dbReference type="HOGENOM" id="CLU_100590_5_0_9"/>
<dbReference type="Proteomes" id="UP000000823">
    <property type="component" value="Chromosome"/>
</dbReference>
<dbReference type="GO" id="GO:0005737">
    <property type="term" value="C:cytoplasm"/>
    <property type="evidence" value="ECO:0007669"/>
    <property type="project" value="UniProtKB-ARBA"/>
</dbReference>
<dbReference type="GO" id="GO:0015935">
    <property type="term" value="C:small ribosomal subunit"/>
    <property type="evidence" value="ECO:0007669"/>
    <property type="project" value="TreeGrafter"/>
</dbReference>
<dbReference type="GO" id="GO:0003735">
    <property type="term" value="F:structural constituent of ribosome"/>
    <property type="evidence" value="ECO:0007669"/>
    <property type="project" value="InterPro"/>
</dbReference>
<dbReference type="GO" id="GO:0006412">
    <property type="term" value="P:translation"/>
    <property type="evidence" value="ECO:0007669"/>
    <property type="project" value="UniProtKB-UniRule"/>
</dbReference>
<dbReference type="FunFam" id="3.30.1320.10:FF:000002">
    <property type="entry name" value="30S ribosomal protein S16"/>
    <property type="match status" value="1"/>
</dbReference>
<dbReference type="Gene3D" id="3.30.1320.10">
    <property type="match status" value="1"/>
</dbReference>
<dbReference type="HAMAP" id="MF_00385">
    <property type="entry name" value="Ribosomal_bS16"/>
    <property type="match status" value="1"/>
</dbReference>
<dbReference type="InterPro" id="IPR000307">
    <property type="entry name" value="Ribosomal_bS16"/>
</dbReference>
<dbReference type="InterPro" id="IPR023803">
    <property type="entry name" value="Ribosomal_bS16_dom_sf"/>
</dbReference>
<dbReference type="NCBIfam" id="TIGR00002">
    <property type="entry name" value="S16"/>
    <property type="match status" value="1"/>
</dbReference>
<dbReference type="PANTHER" id="PTHR12919">
    <property type="entry name" value="30S RIBOSOMAL PROTEIN S16"/>
    <property type="match status" value="1"/>
</dbReference>
<dbReference type="PANTHER" id="PTHR12919:SF20">
    <property type="entry name" value="SMALL RIBOSOMAL SUBUNIT PROTEIN BS16M"/>
    <property type="match status" value="1"/>
</dbReference>
<dbReference type="Pfam" id="PF00886">
    <property type="entry name" value="Ribosomal_S16"/>
    <property type="match status" value="1"/>
</dbReference>
<dbReference type="SUPFAM" id="SSF54565">
    <property type="entry name" value="Ribosomal protein S16"/>
    <property type="match status" value="1"/>
</dbReference>
<comment type="similarity">
    <text evidence="1">Belongs to the bacterial ribosomal protein bS16 family.</text>
</comment>